<name>AGGA_ECOLX</name>
<organism>
    <name type="scientific">Escherichia coli</name>
    <dbReference type="NCBI Taxonomy" id="562"/>
    <lineage>
        <taxon>Bacteria</taxon>
        <taxon>Pseudomonadati</taxon>
        <taxon>Pseudomonadota</taxon>
        <taxon>Gammaproteobacteria</taxon>
        <taxon>Enterobacterales</taxon>
        <taxon>Enterobacteriaceae</taxon>
        <taxon>Escherichia</taxon>
    </lineage>
</organism>
<dbReference type="EMBL" id="U12894">
    <property type="protein sequence ID" value="AAA57454.1"/>
    <property type="molecule type" value="Genomic_DNA"/>
</dbReference>
<dbReference type="PIR" id="D55853">
    <property type="entry name" value="D55853"/>
</dbReference>
<dbReference type="SMR" id="P46007"/>
<dbReference type="GO" id="GO:0009289">
    <property type="term" value="C:pilus"/>
    <property type="evidence" value="ECO:0007669"/>
    <property type="project" value="UniProtKB-SubCell"/>
</dbReference>
<dbReference type="GO" id="GO:0141025">
    <property type="term" value="P:adhesion of symbiont to host cell surface via host glycoprotein"/>
    <property type="evidence" value="ECO:0000269"/>
    <property type="project" value="SigSci"/>
</dbReference>
<dbReference type="Gene3D" id="2.60.40.2910">
    <property type="match status" value="1"/>
</dbReference>
<sequence>MKTLKNMRRKNLCITLGLVSLLSRGANAALERPPIKATETIRLTVTNDCPVTIATNSPPNVGVSSTTPIIFNATVTTTEQCAKSGARVWLWGTGAANKWVLEHTTNTKQKYTLNPSIDGNSYFQTPGTNAAIYKNVTTRDRVLKASVKVDPKIQVLIPGEYRMILHAGINF</sequence>
<comment type="subcellular location">
    <subcellularLocation>
        <location evidence="2">Fimbrium</location>
    </subcellularLocation>
</comment>
<reference key="1">
    <citation type="journal article" date="1994" name="J. Bacteriol.">
        <title>Identification and characterization of a gene cluster mediating enteroaggregative Escherichia coli aggregative adherence fimbria I biogenesis.</title>
        <authorList>
            <person name="Savarino S.J."/>
            <person name="Fox P."/>
            <person name="Deng Y."/>
            <person name="Nataro J.P."/>
        </authorList>
    </citation>
    <scope>NUCLEOTIDE SEQUENCE [GENOMIC DNA]</scope>
    <source>
        <strain>O3:H2 / 17-2 / EAggEC</strain>
    </source>
</reference>
<feature type="signal peptide" evidence="1">
    <location>
        <begin position="1"/>
        <end position="28"/>
    </location>
</feature>
<feature type="chain" id="PRO_0000009237" description="AAF/I fimbrial subunit">
    <location>
        <begin position="29"/>
        <end position="171"/>
    </location>
</feature>
<gene>
    <name type="primary">aggA</name>
</gene>
<proteinExistence type="inferred from homology"/>
<keyword id="KW-0281">Fimbrium</keyword>
<keyword id="KW-0614">Plasmid</keyword>
<keyword id="KW-0732">Signal</keyword>
<geneLocation type="plasmid">
    <name>P17-2</name>
</geneLocation>
<evidence type="ECO:0000255" key="1"/>
<evidence type="ECO:0000305" key="2"/>
<protein>
    <recommendedName>
        <fullName>AAF/I fimbrial subunit</fullName>
    </recommendedName>
    <alternativeName>
        <fullName>Aggregative adherence fimbria I</fullName>
    </alternativeName>
</protein>
<accession>P46007</accession>